<dbReference type="EC" id="5.4.99.-"/>
<dbReference type="EMBL" id="DP000011">
    <property type="protein sequence ID" value="ABA98930.1"/>
    <property type="molecule type" value="Genomic_DNA"/>
</dbReference>
<dbReference type="EMBL" id="AP008218">
    <property type="protein sequence ID" value="BAF30037.1"/>
    <property type="molecule type" value="Genomic_DNA"/>
</dbReference>
<dbReference type="EMBL" id="AP014968">
    <property type="protein sequence ID" value="BAT17638.1"/>
    <property type="molecule type" value="Genomic_DNA"/>
</dbReference>
<dbReference type="EMBL" id="AK061524">
    <property type="protein sequence ID" value="BAG87983.1"/>
    <property type="molecule type" value="mRNA"/>
</dbReference>
<dbReference type="RefSeq" id="XP_015618310.1">
    <property type="nucleotide sequence ID" value="XM_015762824.1"/>
</dbReference>
<dbReference type="SMR" id="Q2QNM3"/>
<dbReference type="FunCoup" id="Q2QNM3">
    <property type="interactions" value="17"/>
</dbReference>
<dbReference type="STRING" id="39947.Q2QNM3"/>
<dbReference type="PaxDb" id="39947-Q2QNM3"/>
<dbReference type="EnsemblPlants" id="Os12t0560500-01">
    <property type="protein sequence ID" value="Os12t0560500-01"/>
    <property type="gene ID" value="Os12g0560500"/>
</dbReference>
<dbReference type="Gramene" id="Os12t0560500-01">
    <property type="protein sequence ID" value="Os12t0560500-01"/>
    <property type="gene ID" value="Os12g0560500"/>
</dbReference>
<dbReference type="KEGG" id="dosa:Os12g0560500"/>
<dbReference type="eggNOG" id="KOG1919">
    <property type="taxonomic scope" value="Eukaryota"/>
</dbReference>
<dbReference type="InParanoid" id="Q2QNM3"/>
<dbReference type="OMA" id="EPNYAGW"/>
<dbReference type="OrthoDB" id="418349at2759"/>
<dbReference type="Proteomes" id="UP000000763">
    <property type="component" value="Chromosome 12"/>
</dbReference>
<dbReference type="Proteomes" id="UP000059680">
    <property type="component" value="Chromosome 12"/>
</dbReference>
<dbReference type="ExpressionAtlas" id="Q2QNM3">
    <property type="expression patterns" value="baseline and differential"/>
</dbReference>
<dbReference type="GO" id="GO:0009982">
    <property type="term" value="F:pseudouridine synthase activity"/>
    <property type="evidence" value="ECO:0000318"/>
    <property type="project" value="GO_Central"/>
</dbReference>
<dbReference type="GO" id="GO:0003723">
    <property type="term" value="F:RNA binding"/>
    <property type="evidence" value="ECO:0007669"/>
    <property type="project" value="UniProtKB-KW"/>
</dbReference>
<dbReference type="GO" id="GO:0000455">
    <property type="term" value="P:enzyme-directed rRNA pseudouridine synthesis"/>
    <property type="evidence" value="ECO:0000318"/>
    <property type="project" value="GO_Central"/>
</dbReference>
<dbReference type="CDD" id="cd02869">
    <property type="entry name" value="PseudoU_synth_RluA_like"/>
    <property type="match status" value="1"/>
</dbReference>
<dbReference type="Gene3D" id="3.30.2350.10">
    <property type="entry name" value="Pseudouridine synthase"/>
    <property type="match status" value="1"/>
</dbReference>
<dbReference type="InterPro" id="IPR020103">
    <property type="entry name" value="PsdUridine_synth_cat_dom_sf"/>
</dbReference>
<dbReference type="InterPro" id="IPR006224">
    <property type="entry name" value="PsdUridine_synth_RluA-like_CS"/>
</dbReference>
<dbReference type="InterPro" id="IPR006145">
    <property type="entry name" value="PsdUridine_synth_RsuA/RluA"/>
</dbReference>
<dbReference type="InterPro" id="IPR050188">
    <property type="entry name" value="RluA_PseudoU_synthase"/>
</dbReference>
<dbReference type="PANTHER" id="PTHR21600">
    <property type="entry name" value="MITOCHONDRIAL RNA PSEUDOURIDINE SYNTHASE"/>
    <property type="match status" value="1"/>
</dbReference>
<dbReference type="PANTHER" id="PTHR21600:SF47">
    <property type="entry name" value="RNA PSEUDOURIDINE SYNTHASE 1"/>
    <property type="match status" value="1"/>
</dbReference>
<dbReference type="Pfam" id="PF00849">
    <property type="entry name" value="PseudoU_synth_2"/>
    <property type="match status" value="1"/>
</dbReference>
<dbReference type="SUPFAM" id="SSF55120">
    <property type="entry name" value="Pseudouridine synthase"/>
    <property type="match status" value="1"/>
</dbReference>
<dbReference type="PROSITE" id="PS01129">
    <property type="entry name" value="PSI_RLU"/>
    <property type="match status" value="1"/>
</dbReference>
<comment type="catalytic activity">
    <reaction>
        <text>a uridine in RNA = a pseudouridine in RNA</text>
        <dbReference type="Rhea" id="RHEA:48348"/>
        <dbReference type="Rhea" id="RHEA-COMP:12068"/>
        <dbReference type="Rhea" id="RHEA-COMP:12069"/>
        <dbReference type="ChEBI" id="CHEBI:65314"/>
        <dbReference type="ChEBI" id="CHEBI:65315"/>
    </reaction>
</comment>
<comment type="similarity">
    <text evidence="2">Belongs to the pseudouridine synthase RluA family.</text>
</comment>
<proteinExistence type="evidence at transcript level"/>
<reference key="1">
    <citation type="journal article" date="2005" name="BMC Biol.">
        <title>The sequence of rice chromosomes 11 and 12, rich in disease resistance genes and recent gene duplications.</title>
        <authorList>
            <consortium name="The rice chromosomes 11 and 12 sequencing consortia"/>
        </authorList>
    </citation>
    <scope>NUCLEOTIDE SEQUENCE [LARGE SCALE GENOMIC DNA]</scope>
    <source>
        <strain>cv. Nipponbare</strain>
    </source>
</reference>
<reference key="2">
    <citation type="journal article" date="2005" name="Nature">
        <title>The map-based sequence of the rice genome.</title>
        <authorList>
            <consortium name="International rice genome sequencing project (IRGSP)"/>
        </authorList>
    </citation>
    <scope>NUCLEOTIDE SEQUENCE [LARGE SCALE GENOMIC DNA]</scope>
    <source>
        <strain>cv. Nipponbare</strain>
    </source>
</reference>
<reference key="3">
    <citation type="journal article" date="2008" name="Nucleic Acids Res.">
        <title>The rice annotation project database (RAP-DB): 2008 update.</title>
        <authorList>
            <consortium name="The rice annotation project (RAP)"/>
        </authorList>
    </citation>
    <scope>GENOME REANNOTATION</scope>
    <source>
        <strain>cv. Nipponbare</strain>
    </source>
</reference>
<reference key="4">
    <citation type="journal article" date="2013" name="Rice">
        <title>Improvement of the Oryza sativa Nipponbare reference genome using next generation sequence and optical map data.</title>
        <authorList>
            <person name="Kawahara Y."/>
            <person name="de la Bastide M."/>
            <person name="Hamilton J.P."/>
            <person name="Kanamori H."/>
            <person name="McCombie W.R."/>
            <person name="Ouyang S."/>
            <person name="Schwartz D.C."/>
            <person name="Tanaka T."/>
            <person name="Wu J."/>
            <person name="Zhou S."/>
            <person name="Childs K.L."/>
            <person name="Davidson R.M."/>
            <person name="Lin H."/>
            <person name="Quesada-Ocampo L."/>
            <person name="Vaillancourt B."/>
            <person name="Sakai H."/>
            <person name="Lee S.S."/>
            <person name="Kim J."/>
            <person name="Numa H."/>
            <person name="Itoh T."/>
            <person name="Buell C.R."/>
            <person name="Matsumoto T."/>
        </authorList>
    </citation>
    <scope>GENOME REANNOTATION</scope>
    <source>
        <strain>cv. Nipponbare</strain>
    </source>
</reference>
<reference key="5">
    <citation type="journal article" date="2003" name="Science">
        <title>Collection, mapping, and annotation of over 28,000 cDNA clones from japonica rice.</title>
        <authorList>
            <consortium name="The rice full-length cDNA consortium"/>
        </authorList>
    </citation>
    <scope>NUCLEOTIDE SEQUENCE [LARGE SCALE MRNA]</scope>
    <source>
        <strain>cv. Nipponbare</strain>
    </source>
</reference>
<gene>
    <name type="ordered locus">Os12g0560500</name>
    <name type="ordered locus">LOC_Os12g37380</name>
</gene>
<accession>Q2QNM3</accession>
<accession>A0A0P0YBE5</accession>
<organism>
    <name type="scientific">Oryza sativa subsp. japonica</name>
    <name type="common">Rice</name>
    <dbReference type="NCBI Taxonomy" id="39947"/>
    <lineage>
        <taxon>Eukaryota</taxon>
        <taxon>Viridiplantae</taxon>
        <taxon>Streptophyta</taxon>
        <taxon>Embryophyta</taxon>
        <taxon>Tracheophyta</taxon>
        <taxon>Spermatophyta</taxon>
        <taxon>Magnoliopsida</taxon>
        <taxon>Liliopsida</taxon>
        <taxon>Poales</taxon>
        <taxon>Poaceae</taxon>
        <taxon>BOP clade</taxon>
        <taxon>Oryzoideae</taxon>
        <taxon>Oryzeae</taxon>
        <taxon>Oryzinae</taxon>
        <taxon>Oryza</taxon>
        <taxon>Oryza sativa</taxon>
    </lineage>
</organism>
<feature type="chain" id="PRO_0000368022" description="RNA pseudouridine synthase 1">
    <location>
        <begin position="1"/>
        <end position="345"/>
    </location>
</feature>
<feature type="active site" evidence="1">
    <location>
        <position position="134"/>
    </location>
</feature>
<protein>
    <recommendedName>
        <fullName>RNA pseudouridine synthase 1</fullName>
        <ecNumber>5.4.99.-</ecNumber>
    </recommendedName>
    <alternativeName>
        <fullName>RNA pseudouridylate synthase 1</fullName>
    </alternativeName>
    <alternativeName>
        <fullName>RNA-uridine isomerase 1</fullName>
    </alternativeName>
</protein>
<keyword id="KW-0413">Isomerase</keyword>
<keyword id="KW-1185">Reference proteome</keyword>
<keyword id="KW-0694">RNA-binding</keyword>
<sequence>MTRLPLLLHSPRFAAALTTPPPPPLPPARRLVAAAAGGDLSLAMSAATGEYPVPVSPPYPAASKDVELRRAMTASARSAAYSSAPVVFEDEWLAVVDKPAGVYCDALLSALPCSAATLGDEATKPNLHLANRLDRDTSGLMVITKCNKVAGKLVKAFTEHKVKKTYLALCIGYPPAWEKIKICSGHGRSKHGAWRVYAMSDVGRSLPGGSVVRDMSTRFEVLGINGKGQFREPSNFEVDETESITVQEKAADLTSDGDEKNSIILVRAYPQSGRTHQIRLHCQYLGFPIRGDVKYSGVIEWNGVDYDGHALHAESLSFVHPVTGLPVTFRSPLPSWANEFISTMA</sequence>
<name>PUS1_ORYSJ</name>
<evidence type="ECO:0000250" key="1"/>
<evidence type="ECO:0000305" key="2"/>